<dbReference type="EC" id="2.2.1.6"/>
<dbReference type="EMBL" id="L42023">
    <property type="protein sequence ID" value="AAC23232.1"/>
    <property type="molecule type" value="Genomic_DNA"/>
</dbReference>
<dbReference type="PIR" id="B64131">
    <property type="entry name" value="B64131"/>
</dbReference>
<dbReference type="RefSeq" id="NP_439729.1">
    <property type="nucleotide sequence ID" value="NC_000907.1"/>
</dbReference>
<dbReference type="SMR" id="P45260"/>
<dbReference type="STRING" id="71421.HI_1584"/>
<dbReference type="EnsemblBacteria" id="AAC23232">
    <property type="protein sequence ID" value="AAC23232"/>
    <property type="gene ID" value="HI_1584"/>
</dbReference>
<dbReference type="KEGG" id="hin:HI_1584"/>
<dbReference type="PATRIC" id="fig|71421.8.peg.1658"/>
<dbReference type="eggNOG" id="COG0440">
    <property type="taxonomic scope" value="Bacteria"/>
</dbReference>
<dbReference type="HOGENOM" id="CLU_055003_1_3_6"/>
<dbReference type="OrthoDB" id="9787365at2"/>
<dbReference type="PhylomeDB" id="P45260"/>
<dbReference type="BioCyc" id="HINF71421:G1GJ1-1600-MONOMER"/>
<dbReference type="UniPathway" id="UPA00047">
    <property type="reaction ID" value="UER00055"/>
</dbReference>
<dbReference type="UniPathway" id="UPA00049">
    <property type="reaction ID" value="UER00059"/>
</dbReference>
<dbReference type="Proteomes" id="UP000000579">
    <property type="component" value="Chromosome"/>
</dbReference>
<dbReference type="GO" id="GO:0005829">
    <property type="term" value="C:cytosol"/>
    <property type="evidence" value="ECO:0000318"/>
    <property type="project" value="GO_Central"/>
</dbReference>
<dbReference type="GO" id="GO:0003984">
    <property type="term" value="F:acetolactate synthase activity"/>
    <property type="evidence" value="ECO:0000318"/>
    <property type="project" value="GO_Central"/>
</dbReference>
<dbReference type="GO" id="GO:1990610">
    <property type="term" value="F:acetolactate synthase regulator activity"/>
    <property type="evidence" value="ECO:0007669"/>
    <property type="project" value="InterPro"/>
</dbReference>
<dbReference type="GO" id="GO:0009097">
    <property type="term" value="P:isoleucine biosynthetic process"/>
    <property type="evidence" value="ECO:0000318"/>
    <property type="project" value="GO_Central"/>
</dbReference>
<dbReference type="GO" id="GO:0009099">
    <property type="term" value="P:L-valine biosynthetic process"/>
    <property type="evidence" value="ECO:0000318"/>
    <property type="project" value="GO_Central"/>
</dbReference>
<dbReference type="CDD" id="cd04878">
    <property type="entry name" value="ACT_AHAS"/>
    <property type="match status" value="1"/>
</dbReference>
<dbReference type="FunFam" id="3.30.70.1150:FF:000001">
    <property type="entry name" value="Acetolactate synthase small subunit"/>
    <property type="match status" value="1"/>
</dbReference>
<dbReference type="FunFam" id="3.30.70.260:FF:000001">
    <property type="entry name" value="Acetolactate synthase, small subunit"/>
    <property type="match status" value="1"/>
</dbReference>
<dbReference type="Gene3D" id="3.30.70.260">
    <property type="match status" value="1"/>
</dbReference>
<dbReference type="Gene3D" id="3.30.70.1150">
    <property type="entry name" value="ACT-like. Chain A, domain 2"/>
    <property type="match status" value="1"/>
</dbReference>
<dbReference type="InterPro" id="IPR004789">
    <property type="entry name" value="Acetalactate_synth_ssu"/>
</dbReference>
<dbReference type="InterPro" id="IPR027271">
    <property type="entry name" value="Acetolactate_synth/TF_NikR_C"/>
</dbReference>
<dbReference type="InterPro" id="IPR019455">
    <property type="entry name" value="Acetolactate_synth_ssu_C"/>
</dbReference>
<dbReference type="InterPro" id="IPR045865">
    <property type="entry name" value="ACT-like_dom_sf"/>
</dbReference>
<dbReference type="InterPro" id="IPR002912">
    <property type="entry name" value="ACT_dom"/>
</dbReference>
<dbReference type="InterPro" id="IPR039557">
    <property type="entry name" value="AHAS_ACT"/>
</dbReference>
<dbReference type="InterPro" id="IPR054480">
    <property type="entry name" value="AHAS_small-like_ACT"/>
</dbReference>
<dbReference type="NCBIfam" id="TIGR00119">
    <property type="entry name" value="acolac_sm"/>
    <property type="match status" value="1"/>
</dbReference>
<dbReference type="NCBIfam" id="NF008864">
    <property type="entry name" value="PRK11895.1"/>
    <property type="match status" value="1"/>
</dbReference>
<dbReference type="PANTHER" id="PTHR30239">
    <property type="entry name" value="ACETOLACTATE SYNTHASE SMALL SUBUNIT"/>
    <property type="match status" value="1"/>
</dbReference>
<dbReference type="PANTHER" id="PTHR30239:SF0">
    <property type="entry name" value="ACETOLACTATE SYNTHASE SMALL SUBUNIT 1, CHLOROPLASTIC"/>
    <property type="match status" value="1"/>
</dbReference>
<dbReference type="Pfam" id="PF22629">
    <property type="entry name" value="ACT_AHAS_ss"/>
    <property type="match status" value="1"/>
</dbReference>
<dbReference type="Pfam" id="PF10369">
    <property type="entry name" value="ALS_ss_C"/>
    <property type="match status" value="1"/>
</dbReference>
<dbReference type="SUPFAM" id="SSF55021">
    <property type="entry name" value="ACT-like"/>
    <property type="match status" value="2"/>
</dbReference>
<dbReference type="PROSITE" id="PS51671">
    <property type="entry name" value="ACT"/>
    <property type="match status" value="1"/>
</dbReference>
<reference key="1">
    <citation type="journal article" date="1995" name="Science">
        <title>Whole-genome random sequencing and assembly of Haemophilus influenzae Rd.</title>
        <authorList>
            <person name="Fleischmann R.D."/>
            <person name="Adams M.D."/>
            <person name="White O."/>
            <person name="Clayton R.A."/>
            <person name="Kirkness E.F."/>
            <person name="Kerlavage A.R."/>
            <person name="Bult C.J."/>
            <person name="Tomb J.-F."/>
            <person name="Dougherty B.A."/>
            <person name="Merrick J.M."/>
            <person name="McKenney K."/>
            <person name="Sutton G.G."/>
            <person name="FitzHugh W."/>
            <person name="Fields C.A."/>
            <person name="Gocayne J.D."/>
            <person name="Scott J.D."/>
            <person name="Shirley R."/>
            <person name="Liu L.-I."/>
            <person name="Glodek A."/>
            <person name="Kelley J.M."/>
            <person name="Weidman J.F."/>
            <person name="Phillips C.A."/>
            <person name="Spriggs T."/>
            <person name="Hedblom E."/>
            <person name="Cotton M.D."/>
            <person name="Utterback T.R."/>
            <person name="Hanna M.C."/>
            <person name="Nguyen D.T."/>
            <person name="Saudek D.M."/>
            <person name="Brandon R.C."/>
            <person name="Fine L.D."/>
            <person name="Fritchman J.L."/>
            <person name="Fuhrmann J.L."/>
            <person name="Geoghagen N.S.M."/>
            <person name="Gnehm C.L."/>
            <person name="McDonald L.A."/>
            <person name="Small K.V."/>
            <person name="Fraser C.M."/>
            <person name="Smith H.O."/>
            <person name="Venter J.C."/>
        </authorList>
    </citation>
    <scope>NUCLEOTIDE SEQUENCE [LARGE SCALE GENOMIC DNA]</scope>
    <source>
        <strain>ATCC 51907 / DSM 11121 / KW20 / Rd</strain>
    </source>
</reference>
<name>ILVH_HAEIN</name>
<keyword id="KW-0028">Amino-acid biosynthesis</keyword>
<keyword id="KW-0100">Branched-chain amino acid biosynthesis</keyword>
<keyword id="KW-1185">Reference proteome</keyword>
<keyword id="KW-0808">Transferase</keyword>
<sequence length="163" mass="18087">MRRILSVLLENESGALSRVVGLFSQRAFNIESLTVAPTDDPTLSRMTIEAVGDAQALEQIEKQLHKLVDVFKVVNLSEQEHIEREIVLAKVRAVGSSRDEIKRLADIFRGQIVDVTPKSYTIQLSGTNDKVDAFISALKEETTLLEIVRSGLISVSRGEKNIL</sequence>
<organism>
    <name type="scientific">Haemophilus influenzae (strain ATCC 51907 / DSM 11121 / KW20 / Rd)</name>
    <dbReference type="NCBI Taxonomy" id="71421"/>
    <lineage>
        <taxon>Bacteria</taxon>
        <taxon>Pseudomonadati</taxon>
        <taxon>Pseudomonadota</taxon>
        <taxon>Gammaproteobacteria</taxon>
        <taxon>Pasteurellales</taxon>
        <taxon>Pasteurellaceae</taxon>
        <taxon>Haemophilus</taxon>
    </lineage>
</organism>
<protein>
    <recommendedName>
        <fullName>Acetolactate synthase small subunit</fullName>
        <ecNumber>2.2.1.6</ecNumber>
    </recommendedName>
    <alternativeName>
        <fullName>Acetohydroxy-acid synthase small subunit</fullName>
        <shortName>AHAS</shortName>
        <shortName>ALS</shortName>
    </alternativeName>
</protein>
<feature type="chain" id="PRO_0000151412" description="Acetolactate synthase small subunit">
    <location>
        <begin position="1"/>
        <end position="163"/>
    </location>
</feature>
<feature type="domain" description="ACT" evidence="2">
    <location>
        <begin position="4"/>
        <end position="79"/>
    </location>
</feature>
<accession>P45260</accession>
<proteinExistence type="inferred from homology"/>
<evidence type="ECO:0000250" key="1"/>
<evidence type="ECO:0000255" key="2">
    <source>
        <dbReference type="PROSITE-ProRule" id="PRU01007"/>
    </source>
</evidence>
<evidence type="ECO:0000305" key="3"/>
<comment type="catalytic activity">
    <reaction>
        <text>2 pyruvate + H(+) = (2S)-2-acetolactate + CO2</text>
        <dbReference type="Rhea" id="RHEA:25249"/>
        <dbReference type="ChEBI" id="CHEBI:15361"/>
        <dbReference type="ChEBI" id="CHEBI:15378"/>
        <dbReference type="ChEBI" id="CHEBI:16526"/>
        <dbReference type="ChEBI" id="CHEBI:58476"/>
        <dbReference type="EC" id="2.2.1.6"/>
    </reaction>
</comment>
<comment type="pathway">
    <text>Amino-acid biosynthesis; L-isoleucine biosynthesis; L-isoleucine from 2-oxobutanoate: step 1/4.</text>
</comment>
<comment type="pathway">
    <text>Amino-acid biosynthesis; L-valine biosynthesis; L-valine from pyruvate: step 1/4.</text>
</comment>
<comment type="subunit">
    <text evidence="1">Dimer of large and small chains.</text>
</comment>
<comment type="similarity">
    <text evidence="3">Belongs to the acetolactate synthase small subunit family.</text>
</comment>
<gene>
    <name type="primary">ilvH</name>
    <name type="ordered locus">HI_1584</name>
</gene>